<accession>Q6P5I8</accession>
<accession>Q6TNQ6</accession>
<accession>Q7ZWD2</accession>
<keyword id="KW-0256">Endoplasmic reticulum</keyword>
<keyword id="KW-0931">ER-Golgi transport</keyword>
<keyword id="KW-0333">Golgi apparatus</keyword>
<keyword id="KW-0472">Membrane</keyword>
<keyword id="KW-0653">Protein transport</keyword>
<keyword id="KW-1185">Reference proteome</keyword>
<keyword id="KW-0812">Transmembrane</keyword>
<keyword id="KW-1133">Transmembrane helix</keyword>
<keyword id="KW-0813">Transport</keyword>
<reference key="1">
    <citation type="journal article" date="2004" name="Proc. Natl. Acad. Sci. U.S.A.">
        <title>Hematopoietic gene expression profile in zebrafish kidney marrow.</title>
        <authorList>
            <person name="Song H.-D."/>
            <person name="Sun X.-J."/>
            <person name="Deng M."/>
            <person name="Zhang G.-W."/>
            <person name="Zhou Y."/>
            <person name="Wu X.-Y."/>
            <person name="Sheng Y."/>
            <person name="Chen Y."/>
            <person name="Ruan Z."/>
            <person name="Jiang C.-L."/>
            <person name="Fan H.-Y."/>
            <person name="Zon L.I."/>
            <person name="Kanki J.P."/>
            <person name="Liu T.X."/>
            <person name="Look A.T."/>
            <person name="Chen Z."/>
        </authorList>
    </citation>
    <scope>NUCLEOTIDE SEQUENCE [LARGE SCALE MRNA]</scope>
    <source>
        <tissue>Kidney marrow</tissue>
    </source>
</reference>
<reference key="2">
    <citation type="submission" date="2003-11" db="EMBL/GenBank/DDBJ databases">
        <authorList>
            <consortium name="NIH - Zebrafish Gene Collection (ZGC) project"/>
        </authorList>
    </citation>
    <scope>NUCLEOTIDE SEQUENCE [LARGE SCALE MRNA]</scope>
    <source>
        <strain>SJD</strain>
    </source>
</reference>
<evidence type="ECO:0000250" key="1"/>
<evidence type="ECO:0000250" key="2">
    <source>
        <dbReference type="UniProtKB" id="Q969M3"/>
    </source>
</evidence>
<evidence type="ECO:0000250" key="3">
    <source>
        <dbReference type="UniProtKB" id="Q9EQQ2"/>
    </source>
</evidence>
<evidence type="ECO:0000255" key="4"/>
<evidence type="ECO:0000305" key="5"/>
<sequence>MSGFDNFNTDFYQSSYSVDDQNQGGYGYSNTDEPYKPYGQYDYSQPMGYSAAPGMMQPQQPYTGQIYQPTPAFTPTSSQSMYSSSFEDEPPLLEELGINFDHIWQKTLTVLHPLKASDGSIMNETDLAGPMVFCLAFGATLLLTGKIQFGYVYGISAIGCLGMYCLLNLMSMTGVSFGCVASVLGYCLLPMIILSSFGVIFSLQGIMGIILTAAIIGWCSLSASKIFISALAMDGQQLLVAYPCALLYGVFALISVF</sequence>
<name>YIPF5_DANRE</name>
<gene>
    <name type="primary">yipf5</name>
    <name type="ORF">zgc:56513</name>
    <name type="ORF">zgc:77939</name>
</gene>
<comment type="function">
    <text evidence="1">Plays a role in transport between endoplasmic reticulum and Golgi.</text>
</comment>
<comment type="subcellular location">
    <subcellularLocation>
        <location evidence="3">Endoplasmic reticulum membrane</location>
        <topology>Multi-pass membrane protein</topology>
    </subcellularLocation>
    <subcellularLocation>
        <location evidence="2">Golgi apparatus</location>
        <location evidence="2">cis-Golgi network membrane</location>
        <topology>Multi-pass membrane protein</topology>
    </subcellularLocation>
</comment>
<comment type="similarity">
    <text evidence="5">Belongs to the YIP1 family.</text>
</comment>
<dbReference type="EMBL" id="AY391461">
    <property type="protein sequence ID" value="AAQ91273.1"/>
    <property type="molecule type" value="mRNA"/>
</dbReference>
<dbReference type="EMBL" id="BC049469">
    <property type="protein sequence ID" value="AAH49469.1"/>
    <property type="molecule type" value="mRNA"/>
</dbReference>
<dbReference type="EMBL" id="BC062871">
    <property type="protein sequence ID" value="AAH62871.1"/>
    <property type="molecule type" value="mRNA"/>
</dbReference>
<dbReference type="RefSeq" id="NP_956589.1">
    <property type="nucleotide sequence ID" value="NM_200295.1"/>
</dbReference>
<dbReference type="FunCoup" id="Q6P5I8">
    <property type="interactions" value="2702"/>
</dbReference>
<dbReference type="STRING" id="7955.ENSDARP00000009453"/>
<dbReference type="PaxDb" id="7955-ENSDARP00000009453"/>
<dbReference type="Ensembl" id="ENSDART00000008593">
    <property type="protein sequence ID" value="ENSDARP00000009453"/>
    <property type="gene ID" value="ENSDARG00000007279"/>
</dbReference>
<dbReference type="GeneID" id="393265"/>
<dbReference type="KEGG" id="dre:393265"/>
<dbReference type="AGR" id="ZFIN:ZDB-GENE-040426-1057"/>
<dbReference type="CTD" id="81555"/>
<dbReference type="ZFIN" id="ZDB-GENE-040426-1057">
    <property type="gene designation" value="yipf5"/>
</dbReference>
<dbReference type="eggNOG" id="KOG3103">
    <property type="taxonomic scope" value="Eukaryota"/>
</dbReference>
<dbReference type="HOGENOM" id="CLU_074741_2_0_1"/>
<dbReference type="InParanoid" id="Q6P5I8"/>
<dbReference type="OMA" id="HIRAKSM"/>
<dbReference type="OrthoDB" id="440385at2759"/>
<dbReference type="PhylomeDB" id="Q6P5I8"/>
<dbReference type="TreeFam" id="TF313100"/>
<dbReference type="PRO" id="PR:Q6P5I8"/>
<dbReference type="Proteomes" id="UP000000437">
    <property type="component" value="Chromosome 21"/>
</dbReference>
<dbReference type="Bgee" id="ENSDARG00000007279">
    <property type="expression patterns" value="Expressed in blastula and 30 other cell types or tissues"/>
</dbReference>
<dbReference type="GO" id="GO:0005789">
    <property type="term" value="C:endoplasmic reticulum membrane"/>
    <property type="evidence" value="ECO:0007669"/>
    <property type="project" value="UniProtKB-SubCell"/>
</dbReference>
<dbReference type="GO" id="GO:0005802">
    <property type="term" value="C:trans-Golgi network"/>
    <property type="evidence" value="ECO:0000318"/>
    <property type="project" value="GO_Central"/>
</dbReference>
<dbReference type="GO" id="GO:0006888">
    <property type="term" value="P:endoplasmic reticulum to Golgi vesicle-mediated transport"/>
    <property type="evidence" value="ECO:0000318"/>
    <property type="project" value="GO_Central"/>
</dbReference>
<dbReference type="GO" id="GO:0015031">
    <property type="term" value="P:protein transport"/>
    <property type="evidence" value="ECO:0007669"/>
    <property type="project" value="UniProtKB-KW"/>
</dbReference>
<dbReference type="GO" id="GO:0060628">
    <property type="term" value="P:regulation of ER to Golgi vesicle-mediated transport"/>
    <property type="evidence" value="ECO:0000318"/>
    <property type="project" value="GO_Central"/>
</dbReference>
<dbReference type="GO" id="GO:0048280">
    <property type="term" value="P:vesicle fusion with Golgi apparatus"/>
    <property type="evidence" value="ECO:0000318"/>
    <property type="project" value="GO_Central"/>
</dbReference>
<dbReference type="InterPro" id="IPR045231">
    <property type="entry name" value="Yip1/4-like"/>
</dbReference>
<dbReference type="InterPro" id="IPR006977">
    <property type="entry name" value="Yip1_dom"/>
</dbReference>
<dbReference type="PANTHER" id="PTHR21236">
    <property type="entry name" value="GOLGI MEMBRANE PROTEIN YIP1"/>
    <property type="match status" value="1"/>
</dbReference>
<dbReference type="PANTHER" id="PTHR21236:SF6">
    <property type="entry name" value="PROTEIN YIPF5"/>
    <property type="match status" value="1"/>
</dbReference>
<dbReference type="Pfam" id="PF04893">
    <property type="entry name" value="Yip1"/>
    <property type="match status" value="1"/>
</dbReference>
<protein>
    <recommendedName>
        <fullName>Protein YIPF5</fullName>
    </recommendedName>
    <alternativeName>
        <fullName>YIP1 family member 5</fullName>
    </alternativeName>
</protein>
<organism>
    <name type="scientific">Danio rerio</name>
    <name type="common">Zebrafish</name>
    <name type="synonym">Brachydanio rerio</name>
    <dbReference type="NCBI Taxonomy" id="7955"/>
    <lineage>
        <taxon>Eukaryota</taxon>
        <taxon>Metazoa</taxon>
        <taxon>Chordata</taxon>
        <taxon>Craniata</taxon>
        <taxon>Vertebrata</taxon>
        <taxon>Euteleostomi</taxon>
        <taxon>Actinopterygii</taxon>
        <taxon>Neopterygii</taxon>
        <taxon>Teleostei</taxon>
        <taxon>Ostariophysi</taxon>
        <taxon>Cypriniformes</taxon>
        <taxon>Danionidae</taxon>
        <taxon>Danioninae</taxon>
        <taxon>Danio</taxon>
    </lineage>
</organism>
<feature type="chain" id="PRO_0000234333" description="Protein YIPF5">
    <location>
        <begin position="1"/>
        <end position="257"/>
    </location>
</feature>
<feature type="topological domain" description="Cytoplasmic" evidence="2">
    <location>
        <begin position="1"/>
        <end position="124"/>
    </location>
</feature>
<feature type="transmembrane region" description="Helical" evidence="4">
    <location>
        <begin position="125"/>
        <end position="145"/>
    </location>
</feature>
<feature type="topological domain" description="Lumenal" evidence="5">
    <location>
        <position position="146"/>
    </location>
</feature>
<feature type="transmembrane region" description="Helical" evidence="4">
    <location>
        <begin position="147"/>
        <end position="167"/>
    </location>
</feature>
<feature type="topological domain" description="Cytoplasmic" evidence="5">
    <location>
        <begin position="168"/>
        <end position="173"/>
    </location>
</feature>
<feature type="transmembrane region" description="Helical" evidence="4">
    <location>
        <begin position="174"/>
        <end position="194"/>
    </location>
</feature>
<feature type="topological domain" description="Lumenal" evidence="5">
    <location>
        <begin position="195"/>
        <end position="196"/>
    </location>
</feature>
<feature type="transmembrane region" description="Helical" evidence="4">
    <location>
        <begin position="197"/>
        <end position="217"/>
    </location>
</feature>
<feature type="topological domain" description="Cytoplasmic" evidence="5">
    <location>
        <begin position="218"/>
        <end position="236"/>
    </location>
</feature>
<feature type="transmembrane region" description="Helical" evidence="4">
    <location>
        <begin position="237"/>
        <end position="257"/>
    </location>
</feature>
<feature type="sequence conflict" description="In Ref. 1; AAQ91273." evidence="5" ref="1">
    <original>P</original>
    <variation>S</variation>
    <location>
        <position position="34"/>
    </location>
</feature>
<feature type="sequence conflict" description="In Ref. 2; AAH49469." evidence="5" ref="2">
    <original>M</original>
    <variation>V</variation>
    <location>
        <position position="47"/>
    </location>
</feature>
<feature type="sequence conflict" description="In Ref. 2; AAH49469." evidence="5" ref="2">
    <original>V</original>
    <variation>A</variation>
    <location>
        <position position="110"/>
    </location>
</feature>
<feature type="sequence conflict" description="In Ref. 2; AAH49469." evidence="5" ref="2">
    <original>C</original>
    <variation>S</variation>
    <location>
        <position position="165"/>
    </location>
</feature>
<proteinExistence type="evidence at transcript level"/>